<organism>
    <name type="scientific">Chromobacterium violaceum (strain ATCC 12472 / DSM 30191 / JCM 1249 / CCUG 213 / NBRC 12614 / NCIMB 9131 / NCTC 9757 / MK)</name>
    <dbReference type="NCBI Taxonomy" id="243365"/>
    <lineage>
        <taxon>Bacteria</taxon>
        <taxon>Pseudomonadati</taxon>
        <taxon>Pseudomonadota</taxon>
        <taxon>Betaproteobacteria</taxon>
        <taxon>Neisseriales</taxon>
        <taxon>Chromobacteriaceae</taxon>
        <taxon>Chromobacterium</taxon>
    </lineage>
</organism>
<accession>Q7P1P8</accession>
<dbReference type="EC" id="6.3.2.6" evidence="1"/>
<dbReference type="EMBL" id="AE016825">
    <property type="protein sequence ID" value="AAQ57844.1"/>
    <property type="molecule type" value="Genomic_DNA"/>
</dbReference>
<dbReference type="SMR" id="Q7P1P8"/>
<dbReference type="STRING" id="243365.CV_0165"/>
<dbReference type="KEGG" id="cvi:CV_0165"/>
<dbReference type="eggNOG" id="COG0152">
    <property type="taxonomic scope" value="Bacteria"/>
</dbReference>
<dbReference type="HOGENOM" id="CLU_045637_0_0_4"/>
<dbReference type="UniPathway" id="UPA00074">
    <property type="reaction ID" value="UER00131"/>
</dbReference>
<dbReference type="Proteomes" id="UP000001424">
    <property type="component" value="Chromosome"/>
</dbReference>
<dbReference type="GO" id="GO:0005737">
    <property type="term" value="C:cytoplasm"/>
    <property type="evidence" value="ECO:0007669"/>
    <property type="project" value="TreeGrafter"/>
</dbReference>
<dbReference type="GO" id="GO:0005524">
    <property type="term" value="F:ATP binding"/>
    <property type="evidence" value="ECO:0007669"/>
    <property type="project" value="UniProtKB-KW"/>
</dbReference>
<dbReference type="GO" id="GO:0004639">
    <property type="term" value="F:phosphoribosylaminoimidazolesuccinocarboxamide synthase activity"/>
    <property type="evidence" value="ECO:0007669"/>
    <property type="project" value="UniProtKB-UniRule"/>
</dbReference>
<dbReference type="GO" id="GO:0006189">
    <property type="term" value="P:'de novo' IMP biosynthetic process"/>
    <property type="evidence" value="ECO:0007669"/>
    <property type="project" value="UniProtKB-UniRule"/>
</dbReference>
<dbReference type="CDD" id="cd01414">
    <property type="entry name" value="SAICAR_synt_Sc"/>
    <property type="match status" value="1"/>
</dbReference>
<dbReference type="FunFam" id="3.30.200.20:FF:000365">
    <property type="entry name" value="Phosphoribosylaminoimidazole-succinocarboxamide synthase"/>
    <property type="match status" value="1"/>
</dbReference>
<dbReference type="FunFam" id="3.30.470.20:FF:000015">
    <property type="entry name" value="Phosphoribosylaminoimidazole-succinocarboxamide synthase"/>
    <property type="match status" value="1"/>
</dbReference>
<dbReference type="Gene3D" id="3.30.470.20">
    <property type="entry name" value="ATP-grasp fold, B domain"/>
    <property type="match status" value="1"/>
</dbReference>
<dbReference type="Gene3D" id="3.30.200.20">
    <property type="entry name" value="Phosphorylase Kinase, domain 1"/>
    <property type="match status" value="1"/>
</dbReference>
<dbReference type="HAMAP" id="MF_00137">
    <property type="entry name" value="SAICAR_synth"/>
    <property type="match status" value="1"/>
</dbReference>
<dbReference type="InterPro" id="IPR028923">
    <property type="entry name" value="SAICAR_synt/ADE2_N"/>
</dbReference>
<dbReference type="InterPro" id="IPR001636">
    <property type="entry name" value="SAICAR_synth"/>
</dbReference>
<dbReference type="InterPro" id="IPR018236">
    <property type="entry name" value="SAICAR_synthetase_CS"/>
</dbReference>
<dbReference type="NCBIfam" id="NF010568">
    <property type="entry name" value="PRK13961.1"/>
    <property type="match status" value="1"/>
</dbReference>
<dbReference type="NCBIfam" id="TIGR00081">
    <property type="entry name" value="purC"/>
    <property type="match status" value="1"/>
</dbReference>
<dbReference type="PANTHER" id="PTHR43700">
    <property type="entry name" value="PHOSPHORIBOSYLAMINOIMIDAZOLE-SUCCINOCARBOXAMIDE SYNTHASE"/>
    <property type="match status" value="1"/>
</dbReference>
<dbReference type="PANTHER" id="PTHR43700:SF1">
    <property type="entry name" value="PHOSPHORIBOSYLAMINOIMIDAZOLE-SUCCINOCARBOXAMIDE SYNTHASE"/>
    <property type="match status" value="1"/>
</dbReference>
<dbReference type="Pfam" id="PF01259">
    <property type="entry name" value="SAICAR_synt"/>
    <property type="match status" value="1"/>
</dbReference>
<dbReference type="SUPFAM" id="SSF56104">
    <property type="entry name" value="SAICAR synthase-like"/>
    <property type="match status" value="1"/>
</dbReference>
<dbReference type="PROSITE" id="PS01057">
    <property type="entry name" value="SAICAR_SYNTHETASE_1"/>
    <property type="match status" value="1"/>
</dbReference>
<dbReference type="PROSITE" id="PS01058">
    <property type="entry name" value="SAICAR_SYNTHETASE_2"/>
    <property type="match status" value="1"/>
</dbReference>
<gene>
    <name evidence="1" type="primary">purC</name>
    <name type="ordered locus">CV_0165</name>
</gene>
<name>PUR7_CHRVO</name>
<reference key="1">
    <citation type="journal article" date="2003" name="Proc. Natl. Acad. Sci. U.S.A.">
        <title>The complete genome sequence of Chromobacterium violaceum reveals remarkable and exploitable bacterial adaptability.</title>
        <authorList>
            <person name="Vasconcelos A.T.R."/>
            <person name="de Almeida D.F."/>
            <person name="Hungria M."/>
            <person name="Guimaraes C.T."/>
            <person name="Antonio R.V."/>
            <person name="Almeida F.C."/>
            <person name="de Almeida L.G.P."/>
            <person name="de Almeida R."/>
            <person name="Alves-Gomes J.A."/>
            <person name="Andrade E.M."/>
            <person name="Araripe J."/>
            <person name="de Araujo M.F.F."/>
            <person name="Astolfi-Filho S."/>
            <person name="Azevedo V."/>
            <person name="Baptista A.J."/>
            <person name="Bataus L.A.M."/>
            <person name="Batista J.S."/>
            <person name="Belo A."/>
            <person name="van den Berg C."/>
            <person name="Bogo M."/>
            <person name="Bonatto S."/>
            <person name="Bordignon J."/>
            <person name="Brigido M.M."/>
            <person name="Brito C.A."/>
            <person name="Brocchi M."/>
            <person name="Burity H.A."/>
            <person name="Camargo A.A."/>
            <person name="Cardoso D.D.P."/>
            <person name="Carneiro N.P."/>
            <person name="Carraro D.M."/>
            <person name="Carvalho C.M.B."/>
            <person name="Cascardo J.C.M."/>
            <person name="Cavada B.S."/>
            <person name="Chueire L.M.O."/>
            <person name="Creczynski-Pasa T.B."/>
            <person name="Cunha-Junior N.C."/>
            <person name="Fagundes N."/>
            <person name="Falcao C.L."/>
            <person name="Fantinatti F."/>
            <person name="Farias I.P."/>
            <person name="Felipe M.S.S."/>
            <person name="Ferrari L.P."/>
            <person name="Ferro J.A."/>
            <person name="Ferro M.I.T."/>
            <person name="Franco G.R."/>
            <person name="Freitas N.S.A."/>
            <person name="Furlan L.R."/>
            <person name="Gazzinelli R.T."/>
            <person name="Gomes E.A."/>
            <person name="Goncalves P.R."/>
            <person name="Grangeiro T.B."/>
            <person name="Grattapaglia D."/>
            <person name="Grisard E.C."/>
            <person name="Hanna E.S."/>
            <person name="Jardim S.N."/>
            <person name="Laurino J."/>
            <person name="Leoi L.C.T."/>
            <person name="Lima L.F.A."/>
            <person name="Loureiro M.F."/>
            <person name="Lyra M.C.C.P."/>
            <person name="Madeira H.M.F."/>
            <person name="Manfio G.P."/>
            <person name="Maranhao A.Q."/>
            <person name="Martins W.S."/>
            <person name="di Mauro S.M.Z."/>
            <person name="de Medeiros S.R.B."/>
            <person name="Meissner R.V."/>
            <person name="Moreira M.A.M."/>
            <person name="Nascimento F.F."/>
            <person name="Nicolas M.F."/>
            <person name="Oliveira J.G."/>
            <person name="Oliveira S.C."/>
            <person name="Paixao R.F.C."/>
            <person name="Parente J.A."/>
            <person name="Pedrosa F.O."/>
            <person name="Pena S.D.J."/>
            <person name="Pereira J.O."/>
            <person name="Pereira M."/>
            <person name="Pinto L.S.R.C."/>
            <person name="Pinto L.S."/>
            <person name="Porto J.I.R."/>
            <person name="Potrich D.P."/>
            <person name="Ramalho-Neto C.E."/>
            <person name="Reis A.M.M."/>
            <person name="Rigo L.U."/>
            <person name="Rondinelli E."/>
            <person name="Santos E.B.P."/>
            <person name="Santos F.R."/>
            <person name="Schneider M.P.C."/>
            <person name="Seuanez H.N."/>
            <person name="Silva A.M.R."/>
            <person name="da Silva A.L.C."/>
            <person name="Silva D.W."/>
            <person name="Silva R."/>
            <person name="Simoes I.C."/>
            <person name="Simon D."/>
            <person name="Soares C.M.A."/>
            <person name="Soares R.B.A."/>
            <person name="Souza E.M."/>
            <person name="Souza K.R.L."/>
            <person name="Souza R.C."/>
            <person name="Steffens M.B.R."/>
            <person name="Steindel M."/>
            <person name="Teixeira S.R."/>
            <person name="Urmenyi T."/>
            <person name="Vettore A."/>
            <person name="Wassem R."/>
            <person name="Zaha A."/>
            <person name="Simpson A.J.G."/>
        </authorList>
    </citation>
    <scope>NUCLEOTIDE SEQUENCE [LARGE SCALE GENOMIC DNA]</scope>
    <source>
        <strain>ATCC 12472 / DSM 30191 / JCM 1249 / CCUG 213 / NBRC 12614 / NCIMB 9131 / NCTC 9757 / MK</strain>
    </source>
</reference>
<keyword id="KW-0067">ATP-binding</keyword>
<keyword id="KW-0436">Ligase</keyword>
<keyword id="KW-0547">Nucleotide-binding</keyword>
<keyword id="KW-0658">Purine biosynthesis</keyword>
<keyword id="KW-1185">Reference proteome</keyword>
<sequence length="284" mass="31002">MTSLKKIYSGKVRDLYEIDDQRMLMIATDRLSAFDVILDDPIPAKGQILTAISNFWFDKLKDVVPNHLTGDQPEDVVAAADLPQVEGRAVVAKRLKAVPIEAVVRGYLAGSGWKEYRQSGSVCGIALPAGLKEADKLPEPIFTPSTKAAVGDHDENISFAQCEAIVGAELAAKVRDTAILLYQTAAEYAATRGIIICDTKFEFGLDENGTLTLMDEALTPDSSRFWPADSYQPGSNPPSFDKQFVRDWLEASGWNKQAPAPAVPLDVREKTAAKYREALEKLAG</sequence>
<comment type="catalytic activity">
    <reaction evidence="1">
        <text>5-amino-1-(5-phospho-D-ribosyl)imidazole-4-carboxylate + L-aspartate + ATP = (2S)-2-[5-amino-1-(5-phospho-beta-D-ribosyl)imidazole-4-carboxamido]succinate + ADP + phosphate + 2 H(+)</text>
        <dbReference type="Rhea" id="RHEA:22628"/>
        <dbReference type="ChEBI" id="CHEBI:15378"/>
        <dbReference type="ChEBI" id="CHEBI:29991"/>
        <dbReference type="ChEBI" id="CHEBI:30616"/>
        <dbReference type="ChEBI" id="CHEBI:43474"/>
        <dbReference type="ChEBI" id="CHEBI:58443"/>
        <dbReference type="ChEBI" id="CHEBI:77657"/>
        <dbReference type="ChEBI" id="CHEBI:456216"/>
        <dbReference type="EC" id="6.3.2.6"/>
    </reaction>
</comment>
<comment type="pathway">
    <text evidence="1">Purine metabolism; IMP biosynthesis via de novo pathway; 5-amino-1-(5-phospho-D-ribosyl)imidazole-4-carboxamide from 5-amino-1-(5-phospho-D-ribosyl)imidazole-4-carboxylate: step 1/2.</text>
</comment>
<comment type="similarity">
    <text evidence="1">Belongs to the SAICAR synthetase family.</text>
</comment>
<evidence type="ECO:0000255" key="1">
    <source>
        <dbReference type="HAMAP-Rule" id="MF_00137"/>
    </source>
</evidence>
<protein>
    <recommendedName>
        <fullName evidence="1">Phosphoribosylaminoimidazole-succinocarboxamide synthase</fullName>
        <ecNumber evidence="1">6.3.2.6</ecNumber>
    </recommendedName>
    <alternativeName>
        <fullName evidence="1">SAICAR synthetase</fullName>
    </alternativeName>
</protein>
<proteinExistence type="inferred from homology"/>
<feature type="chain" id="PRO_0000100816" description="Phosphoribosylaminoimidazole-succinocarboxamide synthase">
    <location>
        <begin position="1"/>
        <end position="284"/>
    </location>
</feature>